<reference key="1">
    <citation type="submission" date="2006-08" db="EMBL/GenBank/DDBJ databases">
        <title>Complete sequence of chromosome 1 of Shewanella sp. MR-7.</title>
        <authorList>
            <person name="Copeland A."/>
            <person name="Lucas S."/>
            <person name="Lapidus A."/>
            <person name="Barry K."/>
            <person name="Detter J.C."/>
            <person name="Glavina del Rio T."/>
            <person name="Hammon N."/>
            <person name="Israni S."/>
            <person name="Dalin E."/>
            <person name="Tice H."/>
            <person name="Pitluck S."/>
            <person name="Kiss H."/>
            <person name="Brettin T."/>
            <person name="Bruce D."/>
            <person name="Han C."/>
            <person name="Tapia R."/>
            <person name="Gilna P."/>
            <person name="Schmutz J."/>
            <person name="Larimer F."/>
            <person name="Land M."/>
            <person name="Hauser L."/>
            <person name="Kyrpides N."/>
            <person name="Mikhailova N."/>
            <person name="Nealson K."/>
            <person name="Konstantinidis K."/>
            <person name="Klappenbach J."/>
            <person name="Tiedje J."/>
            <person name="Richardson P."/>
        </authorList>
    </citation>
    <scope>NUCLEOTIDE SEQUENCE [LARGE SCALE GENOMIC DNA]</scope>
    <source>
        <strain>MR-7</strain>
    </source>
</reference>
<feature type="chain" id="PRO_1000073059" description="Phosphatidylglycerol--prolipoprotein diacylglyceryl transferase">
    <location>
        <begin position="1"/>
        <end position="268"/>
    </location>
</feature>
<feature type="transmembrane region" description="Helical" evidence="1">
    <location>
        <begin position="27"/>
        <end position="47"/>
    </location>
</feature>
<feature type="transmembrane region" description="Helical" evidence="1">
    <location>
        <begin position="66"/>
        <end position="86"/>
    </location>
</feature>
<feature type="transmembrane region" description="Helical" evidence="1">
    <location>
        <begin position="104"/>
        <end position="124"/>
    </location>
</feature>
<feature type="transmembrane region" description="Helical" evidence="1">
    <location>
        <begin position="130"/>
        <end position="150"/>
    </location>
</feature>
<feature type="transmembrane region" description="Helical" evidence="1">
    <location>
        <begin position="181"/>
        <end position="201"/>
    </location>
</feature>
<feature type="transmembrane region" description="Helical" evidence="1">
    <location>
        <begin position="208"/>
        <end position="228"/>
    </location>
</feature>
<feature type="transmembrane region" description="Helical" evidence="1">
    <location>
        <begin position="242"/>
        <end position="262"/>
    </location>
</feature>
<feature type="binding site" evidence="1">
    <location>
        <position position="149"/>
    </location>
    <ligand>
        <name>a 1,2-diacyl-sn-glycero-3-phospho-(1'-sn-glycerol)</name>
        <dbReference type="ChEBI" id="CHEBI:64716"/>
    </ligand>
</feature>
<sequence>MALNFPNIDPVIVKFGPFDIFGQTFEPALRWYGFTYLVGFVAAMWLLNRQADRSNGLWSREQVSDLLFYGFLGVILGGRIGYVLFYHFDYFLASPMYLFKISEGGMSFHGGLMGVITAMIYIAWKQKRTFFAVADMVAPVVPIGLGAGRIGNFINGELWGRVTDVPWAMVFPSGGPEPRHPSQLYQFALEGVALFLLLYWFSKRTKKVGAVSGMFLLGYGIFRVIVETVRQPDAQLGLYWGFMTMGQILSVPMVLFGLYLILRPEGKQ</sequence>
<dbReference type="EC" id="2.5.1.145" evidence="1"/>
<dbReference type="EMBL" id="CP000444">
    <property type="protein sequence ID" value="ABI43928.1"/>
    <property type="molecule type" value="Genomic_DNA"/>
</dbReference>
<dbReference type="SMR" id="Q0HSH7"/>
<dbReference type="KEGG" id="shm:Shewmr7_2944"/>
<dbReference type="HOGENOM" id="CLU_013386_1_0_6"/>
<dbReference type="UniPathway" id="UPA00664"/>
<dbReference type="GO" id="GO:0005886">
    <property type="term" value="C:plasma membrane"/>
    <property type="evidence" value="ECO:0007669"/>
    <property type="project" value="UniProtKB-SubCell"/>
</dbReference>
<dbReference type="GO" id="GO:0008961">
    <property type="term" value="F:phosphatidylglycerol-prolipoprotein diacylglyceryl transferase activity"/>
    <property type="evidence" value="ECO:0007669"/>
    <property type="project" value="UniProtKB-UniRule"/>
</dbReference>
<dbReference type="GO" id="GO:0042158">
    <property type="term" value="P:lipoprotein biosynthetic process"/>
    <property type="evidence" value="ECO:0007669"/>
    <property type="project" value="UniProtKB-UniRule"/>
</dbReference>
<dbReference type="HAMAP" id="MF_01147">
    <property type="entry name" value="Lgt"/>
    <property type="match status" value="1"/>
</dbReference>
<dbReference type="InterPro" id="IPR001640">
    <property type="entry name" value="Lgt"/>
</dbReference>
<dbReference type="NCBIfam" id="TIGR00544">
    <property type="entry name" value="lgt"/>
    <property type="match status" value="1"/>
</dbReference>
<dbReference type="PANTHER" id="PTHR30589:SF0">
    <property type="entry name" value="PHOSPHATIDYLGLYCEROL--PROLIPOPROTEIN DIACYLGLYCERYL TRANSFERASE"/>
    <property type="match status" value="1"/>
</dbReference>
<dbReference type="PANTHER" id="PTHR30589">
    <property type="entry name" value="PROLIPOPROTEIN DIACYLGLYCERYL TRANSFERASE"/>
    <property type="match status" value="1"/>
</dbReference>
<dbReference type="Pfam" id="PF01790">
    <property type="entry name" value="LGT"/>
    <property type="match status" value="1"/>
</dbReference>
<dbReference type="PROSITE" id="PS01311">
    <property type="entry name" value="LGT"/>
    <property type="match status" value="1"/>
</dbReference>
<name>LGT_SHESR</name>
<protein>
    <recommendedName>
        <fullName evidence="1">Phosphatidylglycerol--prolipoprotein diacylglyceryl transferase</fullName>
        <ecNumber evidence="1">2.5.1.145</ecNumber>
    </recommendedName>
</protein>
<organism>
    <name type="scientific">Shewanella sp. (strain MR-7)</name>
    <dbReference type="NCBI Taxonomy" id="60481"/>
    <lineage>
        <taxon>Bacteria</taxon>
        <taxon>Pseudomonadati</taxon>
        <taxon>Pseudomonadota</taxon>
        <taxon>Gammaproteobacteria</taxon>
        <taxon>Alteromonadales</taxon>
        <taxon>Shewanellaceae</taxon>
        <taxon>Shewanella</taxon>
    </lineage>
</organism>
<gene>
    <name evidence="1" type="primary">lgt</name>
    <name type="ordered locus">Shewmr7_2944</name>
</gene>
<accession>Q0HSH7</accession>
<proteinExistence type="inferred from homology"/>
<comment type="function">
    <text evidence="1">Catalyzes the transfer of the diacylglyceryl group from phosphatidylglycerol to the sulfhydryl group of the N-terminal cysteine of a prolipoprotein, the first step in the formation of mature lipoproteins.</text>
</comment>
<comment type="catalytic activity">
    <reaction evidence="1">
        <text>L-cysteinyl-[prolipoprotein] + a 1,2-diacyl-sn-glycero-3-phospho-(1'-sn-glycerol) = an S-1,2-diacyl-sn-glyceryl-L-cysteinyl-[prolipoprotein] + sn-glycerol 1-phosphate + H(+)</text>
        <dbReference type="Rhea" id="RHEA:56712"/>
        <dbReference type="Rhea" id="RHEA-COMP:14679"/>
        <dbReference type="Rhea" id="RHEA-COMP:14680"/>
        <dbReference type="ChEBI" id="CHEBI:15378"/>
        <dbReference type="ChEBI" id="CHEBI:29950"/>
        <dbReference type="ChEBI" id="CHEBI:57685"/>
        <dbReference type="ChEBI" id="CHEBI:64716"/>
        <dbReference type="ChEBI" id="CHEBI:140658"/>
        <dbReference type="EC" id="2.5.1.145"/>
    </reaction>
</comment>
<comment type="pathway">
    <text evidence="1">Protein modification; lipoprotein biosynthesis (diacylglyceryl transfer).</text>
</comment>
<comment type="subcellular location">
    <subcellularLocation>
        <location evidence="1">Cell inner membrane</location>
        <topology evidence="1">Multi-pass membrane protein</topology>
    </subcellularLocation>
</comment>
<comment type="similarity">
    <text evidence="1">Belongs to the Lgt family.</text>
</comment>
<keyword id="KW-0997">Cell inner membrane</keyword>
<keyword id="KW-1003">Cell membrane</keyword>
<keyword id="KW-0472">Membrane</keyword>
<keyword id="KW-0808">Transferase</keyword>
<keyword id="KW-0812">Transmembrane</keyword>
<keyword id="KW-1133">Transmembrane helix</keyword>
<evidence type="ECO:0000255" key="1">
    <source>
        <dbReference type="HAMAP-Rule" id="MF_01147"/>
    </source>
</evidence>